<protein>
    <recommendedName>
        <fullName evidence="1">S-adenosylmethionine:tRNA ribosyltransferase-isomerase</fullName>
        <ecNumber evidence="1">2.4.99.17</ecNumber>
    </recommendedName>
    <alternativeName>
        <fullName evidence="1">Queuosine biosynthesis protein QueA</fullName>
    </alternativeName>
</protein>
<keyword id="KW-0963">Cytoplasm</keyword>
<keyword id="KW-0671">Queuosine biosynthesis</keyword>
<keyword id="KW-0949">S-adenosyl-L-methionine</keyword>
<keyword id="KW-0808">Transferase</keyword>
<sequence>MQVSDFHFDLPDELIARYPQSERTASRLLQLNGNTGAVKDGSFKDVLELVQAGDLVVFNNTRVIPARMFGRKESGGKLEVLVERMLDEKRFLAHVRSSKSPKPGTLVFLGEEDQYSAEMVARQDALFELHLKADKTILEVLEEIGHMPLPPYIDRPDEDADKERYQTVYNQKPGAVAAPTAGLHFDNQLLEQIKAKGAEFAYVTLHVGAGTFQPVKVDNILEHHMHSEYAEVPQEVVDAIKATKARGGRVIAVGTTSVRSLESAAQESLKNGTELMPFFGDTEIFIFPGYQYQLVDCLITNFHLPESTLIMLVSAFAGYDHTMNAYQHAVANQYRFFSYGDAMFIEKKTQ</sequence>
<reference key="1">
    <citation type="journal article" date="2003" name="Genome Res.">
        <title>Comparative genome analysis of Vibrio vulnificus, a marine pathogen.</title>
        <authorList>
            <person name="Chen C.-Y."/>
            <person name="Wu K.-M."/>
            <person name="Chang Y.-C."/>
            <person name="Chang C.-H."/>
            <person name="Tsai H.-C."/>
            <person name="Liao T.-L."/>
            <person name="Liu Y.-M."/>
            <person name="Chen H.-J."/>
            <person name="Shen A.B.-T."/>
            <person name="Li J.-C."/>
            <person name="Su T.-L."/>
            <person name="Shao C.-P."/>
            <person name="Lee C.-T."/>
            <person name="Hor L.-I."/>
            <person name="Tsai S.-F."/>
        </authorList>
    </citation>
    <scope>NUCLEOTIDE SEQUENCE [LARGE SCALE GENOMIC DNA]</scope>
    <source>
        <strain>YJ016</strain>
    </source>
</reference>
<proteinExistence type="inferred from homology"/>
<feature type="chain" id="PRO_0000165463" description="S-adenosylmethionine:tRNA ribosyltransferase-isomerase">
    <location>
        <begin position="1"/>
        <end position="350"/>
    </location>
</feature>
<organism>
    <name type="scientific">Vibrio vulnificus (strain YJ016)</name>
    <dbReference type="NCBI Taxonomy" id="196600"/>
    <lineage>
        <taxon>Bacteria</taxon>
        <taxon>Pseudomonadati</taxon>
        <taxon>Pseudomonadota</taxon>
        <taxon>Gammaproteobacteria</taxon>
        <taxon>Vibrionales</taxon>
        <taxon>Vibrionaceae</taxon>
        <taxon>Vibrio</taxon>
    </lineage>
</organism>
<gene>
    <name evidence="1" type="primary">queA</name>
    <name type="ordered locus">VV0745</name>
</gene>
<name>QUEA_VIBVY</name>
<accession>Q7MNH2</accession>
<evidence type="ECO:0000255" key="1">
    <source>
        <dbReference type="HAMAP-Rule" id="MF_00113"/>
    </source>
</evidence>
<dbReference type="EC" id="2.4.99.17" evidence="1"/>
<dbReference type="EMBL" id="BA000037">
    <property type="protein sequence ID" value="BAC93509.1"/>
    <property type="molecule type" value="Genomic_DNA"/>
</dbReference>
<dbReference type="RefSeq" id="WP_011149594.1">
    <property type="nucleotide sequence ID" value="NC_005139.1"/>
</dbReference>
<dbReference type="SMR" id="Q7MNH2"/>
<dbReference type="STRING" id="672.VV93_v1c06910"/>
<dbReference type="KEGG" id="vvy:VV0745"/>
<dbReference type="eggNOG" id="COG0809">
    <property type="taxonomic scope" value="Bacteria"/>
</dbReference>
<dbReference type="HOGENOM" id="CLU_039110_1_0_6"/>
<dbReference type="UniPathway" id="UPA00392"/>
<dbReference type="Proteomes" id="UP000002675">
    <property type="component" value="Chromosome I"/>
</dbReference>
<dbReference type="GO" id="GO:0005737">
    <property type="term" value="C:cytoplasm"/>
    <property type="evidence" value="ECO:0007669"/>
    <property type="project" value="UniProtKB-SubCell"/>
</dbReference>
<dbReference type="GO" id="GO:0051075">
    <property type="term" value="F:S-adenosylmethionine:tRNA ribosyltransferase-isomerase activity"/>
    <property type="evidence" value="ECO:0007669"/>
    <property type="project" value="UniProtKB-EC"/>
</dbReference>
<dbReference type="GO" id="GO:0008616">
    <property type="term" value="P:queuosine biosynthetic process"/>
    <property type="evidence" value="ECO:0007669"/>
    <property type="project" value="UniProtKB-UniRule"/>
</dbReference>
<dbReference type="GO" id="GO:0002099">
    <property type="term" value="P:tRNA wobble guanine modification"/>
    <property type="evidence" value="ECO:0007669"/>
    <property type="project" value="TreeGrafter"/>
</dbReference>
<dbReference type="FunFam" id="2.40.10.240:FF:000001">
    <property type="entry name" value="S-adenosylmethionine:tRNA ribosyltransferase-isomerase"/>
    <property type="match status" value="1"/>
</dbReference>
<dbReference type="FunFam" id="3.40.1780.10:FF:000001">
    <property type="entry name" value="S-adenosylmethionine:tRNA ribosyltransferase-isomerase"/>
    <property type="match status" value="1"/>
</dbReference>
<dbReference type="Gene3D" id="2.40.10.240">
    <property type="entry name" value="QueA-like"/>
    <property type="match status" value="1"/>
</dbReference>
<dbReference type="Gene3D" id="3.40.1780.10">
    <property type="entry name" value="QueA-like"/>
    <property type="match status" value="1"/>
</dbReference>
<dbReference type="HAMAP" id="MF_00113">
    <property type="entry name" value="QueA"/>
    <property type="match status" value="1"/>
</dbReference>
<dbReference type="InterPro" id="IPR003699">
    <property type="entry name" value="QueA"/>
</dbReference>
<dbReference type="InterPro" id="IPR042118">
    <property type="entry name" value="QueA_dom1"/>
</dbReference>
<dbReference type="InterPro" id="IPR042119">
    <property type="entry name" value="QueA_dom2"/>
</dbReference>
<dbReference type="InterPro" id="IPR036100">
    <property type="entry name" value="QueA_sf"/>
</dbReference>
<dbReference type="NCBIfam" id="NF001140">
    <property type="entry name" value="PRK00147.1"/>
    <property type="match status" value="1"/>
</dbReference>
<dbReference type="NCBIfam" id="TIGR00113">
    <property type="entry name" value="queA"/>
    <property type="match status" value="1"/>
</dbReference>
<dbReference type="PANTHER" id="PTHR30307">
    <property type="entry name" value="S-ADENOSYLMETHIONINE:TRNA RIBOSYLTRANSFERASE-ISOMERASE"/>
    <property type="match status" value="1"/>
</dbReference>
<dbReference type="PANTHER" id="PTHR30307:SF0">
    <property type="entry name" value="S-ADENOSYLMETHIONINE:TRNA RIBOSYLTRANSFERASE-ISOMERASE"/>
    <property type="match status" value="1"/>
</dbReference>
<dbReference type="Pfam" id="PF02547">
    <property type="entry name" value="Queuosine_synth"/>
    <property type="match status" value="1"/>
</dbReference>
<dbReference type="SUPFAM" id="SSF111337">
    <property type="entry name" value="QueA-like"/>
    <property type="match status" value="1"/>
</dbReference>
<comment type="function">
    <text evidence="1">Transfers and isomerizes the ribose moiety from AdoMet to the 7-aminomethyl group of 7-deazaguanine (preQ1-tRNA) to give epoxyqueuosine (oQ-tRNA).</text>
</comment>
<comment type="catalytic activity">
    <reaction evidence="1">
        <text>7-aminomethyl-7-carbaguanosine(34) in tRNA + S-adenosyl-L-methionine = epoxyqueuosine(34) in tRNA + adenine + L-methionine + 2 H(+)</text>
        <dbReference type="Rhea" id="RHEA:32155"/>
        <dbReference type="Rhea" id="RHEA-COMP:10342"/>
        <dbReference type="Rhea" id="RHEA-COMP:18582"/>
        <dbReference type="ChEBI" id="CHEBI:15378"/>
        <dbReference type="ChEBI" id="CHEBI:16708"/>
        <dbReference type="ChEBI" id="CHEBI:57844"/>
        <dbReference type="ChEBI" id="CHEBI:59789"/>
        <dbReference type="ChEBI" id="CHEBI:82833"/>
        <dbReference type="ChEBI" id="CHEBI:194443"/>
        <dbReference type="EC" id="2.4.99.17"/>
    </reaction>
</comment>
<comment type="pathway">
    <text evidence="1">tRNA modification; tRNA-queuosine biosynthesis.</text>
</comment>
<comment type="subunit">
    <text evidence="1">Monomer.</text>
</comment>
<comment type="subcellular location">
    <subcellularLocation>
        <location evidence="1">Cytoplasm</location>
    </subcellularLocation>
</comment>
<comment type="similarity">
    <text evidence="1">Belongs to the QueA family.</text>
</comment>